<dbReference type="EC" id="4.1.1.39" evidence="1"/>
<dbReference type="EMBL" id="AF097517">
    <property type="protein sequence ID" value="AAD13766.1"/>
    <property type="molecule type" value="Genomic_DNA"/>
</dbReference>
<dbReference type="EMBL" id="L13929">
    <property type="protein sequence ID" value="AAB01594.1"/>
    <property type="molecule type" value="Genomic_DNA"/>
</dbReference>
<dbReference type="EMBL" id="DQ383815">
    <property type="protein sequence ID" value="ABD47154.1"/>
    <property type="molecule type" value="Genomic_DNA"/>
</dbReference>
<dbReference type="RefSeq" id="YP_588125.1">
    <property type="nucleotide sequence ID" value="NC_007977.1"/>
</dbReference>
<dbReference type="SMR" id="P45738"/>
<dbReference type="GeneID" id="4055709"/>
<dbReference type="KEGG" id="han:4055709"/>
<dbReference type="OrthoDB" id="563909at2759"/>
<dbReference type="BRENDA" id="4.1.1.39">
    <property type="organism ID" value="2597"/>
</dbReference>
<dbReference type="GO" id="GO:0009507">
    <property type="term" value="C:chloroplast"/>
    <property type="evidence" value="ECO:0007669"/>
    <property type="project" value="UniProtKB-SubCell"/>
</dbReference>
<dbReference type="GO" id="GO:0000287">
    <property type="term" value="F:magnesium ion binding"/>
    <property type="evidence" value="ECO:0007669"/>
    <property type="project" value="UniProtKB-UniRule"/>
</dbReference>
<dbReference type="GO" id="GO:0004497">
    <property type="term" value="F:monooxygenase activity"/>
    <property type="evidence" value="ECO:0007669"/>
    <property type="project" value="UniProtKB-KW"/>
</dbReference>
<dbReference type="GO" id="GO:0016984">
    <property type="term" value="F:ribulose-bisphosphate carboxylase activity"/>
    <property type="evidence" value="ECO:0007669"/>
    <property type="project" value="UniProtKB-UniRule"/>
</dbReference>
<dbReference type="GO" id="GO:0009853">
    <property type="term" value="P:photorespiration"/>
    <property type="evidence" value="ECO:0007669"/>
    <property type="project" value="UniProtKB-KW"/>
</dbReference>
<dbReference type="GO" id="GO:0019253">
    <property type="term" value="P:reductive pentose-phosphate cycle"/>
    <property type="evidence" value="ECO:0007669"/>
    <property type="project" value="UniProtKB-UniRule"/>
</dbReference>
<dbReference type="CDD" id="cd08212">
    <property type="entry name" value="RuBisCO_large_I"/>
    <property type="match status" value="1"/>
</dbReference>
<dbReference type="FunFam" id="3.20.20.110:FF:000001">
    <property type="entry name" value="Ribulose bisphosphate carboxylase large chain"/>
    <property type="match status" value="1"/>
</dbReference>
<dbReference type="FunFam" id="3.30.70.150:FF:000001">
    <property type="entry name" value="Ribulose bisphosphate carboxylase large chain"/>
    <property type="match status" value="1"/>
</dbReference>
<dbReference type="Gene3D" id="3.20.20.110">
    <property type="entry name" value="Ribulose bisphosphate carboxylase, large subunit, C-terminal domain"/>
    <property type="match status" value="1"/>
</dbReference>
<dbReference type="Gene3D" id="3.30.70.150">
    <property type="entry name" value="RuBisCO large subunit, N-terminal domain"/>
    <property type="match status" value="1"/>
</dbReference>
<dbReference type="HAMAP" id="MF_01338">
    <property type="entry name" value="RuBisCO_L_type1"/>
    <property type="match status" value="1"/>
</dbReference>
<dbReference type="InterPro" id="IPR033966">
    <property type="entry name" value="RuBisCO"/>
</dbReference>
<dbReference type="InterPro" id="IPR020878">
    <property type="entry name" value="RuBisCo_large_chain_AS"/>
</dbReference>
<dbReference type="InterPro" id="IPR000685">
    <property type="entry name" value="RuBisCO_lsu_C"/>
</dbReference>
<dbReference type="InterPro" id="IPR036376">
    <property type="entry name" value="RuBisCO_lsu_C_sf"/>
</dbReference>
<dbReference type="InterPro" id="IPR017443">
    <property type="entry name" value="RuBisCO_lsu_fd_N"/>
</dbReference>
<dbReference type="InterPro" id="IPR036422">
    <property type="entry name" value="RuBisCO_lsu_N_sf"/>
</dbReference>
<dbReference type="InterPro" id="IPR020888">
    <property type="entry name" value="RuBisCO_lsuI"/>
</dbReference>
<dbReference type="NCBIfam" id="NF003252">
    <property type="entry name" value="PRK04208.1"/>
    <property type="match status" value="1"/>
</dbReference>
<dbReference type="PANTHER" id="PTHR42704">
    <property type="entry name" value="RIBULOSE BISPHOSPHATE CARBOXYLASE"/>
    <property type="match status" value="1"/>
</dbReference>
<dbReference type="PANTHER" id="PTHR42704:SF15">
    <property type="entry name" value="RIBULOSE BISPHOSPHATE CARBOXYLASE LARGE CHAIN"/>
    <property type="match status" value="1"/>
</dbReference>
<dbReference type="Pfam" id="PF00016">
    <property type="entry name" value="RuBisCO_large"/>
    <property type="match status" value="1"/>
</dbReference>
<dbReference type="Pfam" id="PF02788">
    <property type="entry name" value="RuBisCO_large_N"/>
    <property type="match status" value="1"/>
</dbReference>
<dbReference type="SFLD" id="SFLDG01052">
    <property type="entry name" value="RuBisCO"/>
    <property type="match status" value="1"/>
</dbReference>
<dbReference type="SFLD" id="SFLDS00014">
    <property type="entry name" value="RuBisCO"/>
    <property type="match status" value="1"/>
</dbReference>
<dbReference type="SFLD" id="SFLDG00301">
    <property type="entry name" value="RuBisCO-like_proteins"/>
    <property type="match status" value="1"/>
</dbReference>
<dbReference type="SUPFAM" id="SSF51649">
    <property type="entry name" value="RuBisCo, C-terminal domain"/>
    <property type="match status" value="1"/>
</dbReference>
<dbReference type="SUPFAM" id="SSF54966">
    <property type="entry name" value="RuBisCO, large subunit, small (N-terminal) domain"/>
    <property type="match status" value="1"/>
</dbReference>
<dbReference type="PROSITE" id="PS00157">
    <property type="entry name" value="RUBISCO_LARGE"/>
    <property type="match status" value="1"/>
</dbReference>
<gene>
    <name evidence="1" type="primary">rbcL</name>
</gene>
<protein>
    <recommendedName>
        <fullName evidence="1">Ribulose bisphosphate carboxylase large chain</fullName>
        <shortName evidence="1">RuBisCO large subunit</shortName>
        <ecNumber evidence="1">4.1.1.39</ecNumber>
    </recommendedName>
</protein>
<reference key="1">
    <citation type="journal article" date="1999" name="Plant Physiol.">
        <title>Plastome engineering of ribulose-1,5-bisphosphate carboxylase/oxygenase in tobacco to form a sunflower large subunit and tobacco small subunit hybrid.</title>
        <authorList>
            <person name="Kanevski I."/>
            <person name="Maliga P."/>
            <person name="Rhoades D.F."/>
            <person name="Gutteridge S."/>
        </authorList>
    </citation>
    <scope>NUCLEOTIDE SEQUENCE [GENOMIC DNA]</scope>
</reference>
<reference key="2">
    <citation type="submission" date="1993-04" db="EMBL/GenBank/DDBJ databases">
        <title>Interfamilial relationships of the Asteraceae.</title>
        <authorList>
            <person name="Michaels H.J."/>
        </authorList>
    </citation>
    <scope>NUCLEOTIDE SEQUENCE [GENOMIC DNA]</scope>
</reference>
<reference key="3">
    <citation type="submission" date="2006-01" db="EMBL/GenBank/DDBJ databases">
        <title>A comparison of the first two published chloroplast genomes in Asteraceae: Lactuca and Helianthus.</title>
        <authorList>
            <person name="Timme R.E."/>
            <person name="Kuehl J.V."/>
            <person name="Boore J.L."/>
            <person name="Jansen R.K."/>
        </authorList>
    </citation>
    <scope>NUCLEOTIDE SEQUENCE [LARGE SCALE GENOMIC DNA]</scope>
    <source>
        <strain>cv. HA383</strain>
    </source>
</reference>
<comment type="function">
    <text evidence="1">RuBisCO catalyzes two reactions: the carboxylation of D-ribulose 1,5-bisphosphate, the primary event in carbon dioxide fixation, as well as the oxidative fragmentation of the pentose substrate in the photorespiration process. Both reactions occur simultaneously and in competition at the same active site.</text>
</comment>
<comment type="catalytic activity">
    <reaction evidence="1">
        <text>2 (2R)-3-phosphoglycerate + 2 H(+) = D-ribulose 1,5-bisphosphate + CO2 + H2O</text>
        <dbReference type="Rhea" id="RHEA:23124"/>
        <dbReference type="ChEBI" id="CHEBI:15377"/>
        <dbReference type="ChEBI" id="CHEBI:15378"/>
        <dbReference type="ChEBI" id="CHEBI:16526"/>
        <dbReference type="ChEBI" id="CHEBI:57870"/>
        <dbReference type="ChEBI" id="CHEBI:58272"/>
        <dbReference type="EC" id="4.1.1.39"/>
    </reaction>
</comment>
<comment type="catalytic activity">
    <reaction evidence="1">
        <text>D-ribulose 1,5-bisphosphate + O2 = 2-phosphoglycolate + (2R)-3-phosphoglycerate + 2 H(+)</text>
        <dbReference type="Rhea" id="RHEA:36631"/>
        <dbReference type="ChEBI" id="CHEBI:15378"/>
        <dbReference type="ChEBI" id="CHEBI:15379"/>
        <dbReference type="ChEBI" id="CHEBI:57870"/>
        <dbReference type="ChEBI" id="CHEBI:58033"/>
        <dbReference type="ChEBI" id="CHEBI:58272"/>
    </reaction>
</comment>
<comment type="cofactor">
    <cofactor evidence="1">
        <name>Mg(2+)</name>
        <dbReference type="ChEBI" id="CHEBI:18420"/>
    </cofactor>
    <text evidence="1">Binds 1 Mg(2+) ion per subunit.</text>
</comment>
<comment type="subunit">
    <text evidence="1">Heterohexadecamer of 8 large chains and 8 small chains; disulfide-linked. The disulfide link is formed within the large subunit homodimers.</text>
</comment>
<comment type="subcellular location">
    <subcellularLocation>
        <location>Plastid</location>
        <location>Chloroplast</location>
    </subcellularLocation>
</comment>
<comment type="PTM">
    <text evidence="1">The disulfide bond which can form in the large chain dimeric partners within the hexadecamer appears to be associated with oxidative stress and protein turnover.</text>
</comment>
<comment type="miscellaneous">
    <text evidence="1">The basic functional RuBisCO is composed of a large chain homodimer in a 'head-to-tail' conformation. In form I RuBisCO this homodimer is arranged in a barrel-like tetramer with the small subunits forming a tetrameric 'cap' on each end of the 'barrel'.</text>
</comment>
<comment type="similarity">
    <text evidence="1">Belongs to the RuBisCO large chain family. Type I subfamily.</text>
</comment>
<evidence type="ECO:0000255" key="1">
    <source>
        <dbReference type="HAMAP-Rule" id="MF_01338"/>
    </source>
</evidence>
<evidence type="ECO:0000305" key="2"/>
<keyword id="KW-0007">Acetylation</keyword>
<keyword id="KW-0113">Calvin cycle</keyword>
<keyword id="KW-0120">Carbon dioxide fixation</keyword>
<keyword id="KW-0150">Chloroplast</keyword>
<keyword id="KW-1015">Disulfide bond</keyword>
<keyword id="KW-0456">Lyase</keyword>
<keyword id="KW-0460">Magnesium</keyword>
<keyword id="KW-0479">Metal-binding</keyword>
<keyword id="KW-0488">Methylation</keyword>
<keyword id="KW-0503">Monooxygenase</keyword>
<keyword id="KW-0560">Oxidoreductase</keyword>
<keyword id="KW-0601">Photorespiration</keyword>
<keyword id="KW-0602">Photosynthesis</keyword>
<keyword id="KW-0934">Plastid</keyword>
<proteinExistence type="inferred from homology"/>
<geneLocation type="chloroplast"/>
<organism>
    <name type="scientific">Helianthus annuus</name>
    <name type="common">Common sunflower</name>
    <dbReference type="NCBI Taxonomy" id="4232"/>
    <lineage>
        <taxon>Eukaryota</taxon>
        <taxon>Viridiplantae</taxon>
        <taxon>Streptophyta</taxon>
        <taxon>Embryophyta</taxon>
        <taxon>Tracheophyta</taxon>
        <taxon>Spermatophyta</taxon>
        <taxon>Magnoliopsida</taxon>
        <taxon>eudicotyledons</taxon>
        <taxon>Gunneridae</taxon>
        <taxon>Pentapetalae</taxon>
        <taxon>asterids</taxon>
        <taxon>campanulids</taxon>
        <taxon>Asterales</taxon>
        <taxon>Asteraceae</taxon>
        <taxon>Asteroideae</taxon>
        <taxon>Heliantheae alliance</taxon>
        <taxon>Heliantheae</taxon>
        <taxon>Helianthus</taxon>
    </lineage>
</organism>
<name>RBL_HELAN</name>
<sequence length="485" mass="53853">MSPQTETKASVGFKAGVKDYKLTYYTPEYETKDTDILAAFRVTPQPGVPPEEAGAAVAAESSTGTWTTVWTDGLTSLDRYKGRCYGLEPVPGEDNQFIAYVAYPLDLFEEGSVTNMFTSIVGNVFGFKALRALRLEDLRIPTAYVKTFDGPPHGIQVERDKLNKYGRPLLGCTIKPKLGLSAKNYGRACYECLRGGLDFTKDDENVNSQPFMRWRDRFLFCAEAIYKAQAETGEIKGHYLNATAGNCEDMMKRAVFARELGVPIVMHDYLTGGFTANTSLSQYCRDNGLLLHIHRAMHAVIDRQKNHGMHFRVLAKALRMSGGDHIHSGTVVGKLEGEREITLGFVDLLRDDFIEKDRSRGIYFTQDWVSLPGVLPVASGGIHVWHMPALTEIFGDDSVLQFGGGTLGHPWGNAPGAVANRVALEACVQARNEGRDLATEGNEIIREATKWSPELAAACEVWKEIKFEFQAMDTLDTDKDKDKKR</sequence>
<accession>P45738</accession>
<accession>Q9ZSR9</accession>
<feature type="propeptide" id="PRO_0000031247" evidence="1">
    <location>
        <begin position="1"/>
        <end position="2"/>
    </location>
</feature>
<feature type="chain" id="PRO_0000031248" description="Ribulose bisphosphate carboxylase large chain">
    <location>
        <begin position="3"/>
        <end position="485"/>
    </location>
</feature>
<feature type="active site" description="Proton acceptor" evidence="1">
    <location>
        <position position="175"/>
    </location>
</feature>
<feature type="active site" description="Proton acceptor" evidence="1">
    <location>
        <position position="294"/>
    </location>
</feature>
<feature type="binding site" description="in homodimeric partner" evidence="1">
    <location>
        <position position="123"/>
    </location>
    <ligand>
        <name>substrate</name>
    </ligand>
</feature>
<feature type="binding site" evidence="1">
    <location>
        <position position="173"/>
    </location>
    <ligand>
        <name>substrate</name>
    </ligand>
</feature>
<feature type="binding site" evidence="1">
    <location>
        <position position="177"/>
    </location>
    <ligand>
        <name>substrate</name>
    </ligand>
</feature>
<feature type="binding site" description="via carbamate group" evidence="1">
    <location>
        <position position="201"/>
    </location>
    <ligand>
        <name>Mg(2+)</name>
        <dbReference type="ChEBI" id="CHEBI:18420"/>
    </ligand>
</feature>
<feature type="binding site" evidence="1">
    <location>
        <position position="203"/>
    </location>
    <ligand>
        <name>Mg(2+)</name>
        <dbReference type="ChEBI" id="CHEBI:18420"/>
    </ligand>
</feature>
<feature type="binding site" evidence="1">
    <location>
        <position position="204"/>
    </location>
    <ligand>
        <name>Mg(2+)</name>
        <dbReference type="ChEBI" id="CHEBI:18420"/>
    </ligand>
</feature>
<feature type="binding site" evidence="1">
    <location>
        <position position="295"/>
    </location>
    <ligand>
        <name>substrate</name>
    </ligand>
</feature>
<feature type="binding site" evidence="1">
    <location>
        <position position="327"/>
    </location>
    <ligand>
        <name>substrate</name>
    </ligand>
</feature>
<feature type="binding site" evidence="1">
    <location>
        <position position="379"/>
    </location>
    <ligand>
        <name>substrate</name>
    </ligand>
</feature>
<feature type="site" description="Transition state stabilizer" evidence="1">
    <location>
        <position position="334"/>
    </location>
</feature>
<feature type="modified residue" description="N-acetylproline" evidence="1">
    <location>
        <position position="3"/>
    </location>
</feature>
<feature type="modified residue" description="N6,N6,N6-trimethyllysine" evidence="1">
    <location>
        <position position="14"/>
    </location>
</feature>
<feature type="modified residue" description="N6-carboxylysine" evidence="1">
    <location>
        <position position="201"/>
    </location>
</feature>
<feature type="disulfide bond" description="Interchain; in linked form" evidence="1">
    <location>
        <position position="247"/>
    </location>
</feature>
<feature type="sequence conflict" description="In Ref. 2; AAB01594." evidence="2" ref="2">
    <original>I</original>
    <variation>L</variation>
    <location>
        <position position="225"/>
    </location>
</feature>
<feature type="sequence conflict" description="In Ref. 2; AAB01594." evidence="2" ref="2">
    <original>A</original>
    <variation>T</variation>
    <location>
        <position position="244"/>
    </location>
</feature>
<feature type="sequence conflict" description="In Ref. 2; AAB01594." evidence="2" ref="2">
    <original>G</original>
    <variation>E</variation>
    <location>
        <position position="412"/>
    </location>
</feature>
<feature type="sequence conflict" description="In Ref. 2; AAB01594." evidence="2" ref="2">
    <original>GA</original>
    <variation>VV</variation>
    <location>
        <begin position="416"/>
        <end position="417"/>
    </location>
</feature>
<feature type="sequence conflict" description="In Ref. 2; AAB01594." evidence="2" ref="2">
    <original>AT</original>
    <variation>HS</variation>
    <location>
        <begin position="448"/>
        <end position="449"/>
    </location>
</feature>
<feature type="sequence conflict" description="In Ref. 2; AAB01594." evidence="2" ref="2">
    <original>T</original>
    <variation>P</variation>
    <location>
        <position position="474"/>
    </location>
</feature>